<protein>
    <recommendedName>
        <fullName evidence="1">Peptide deformylase</fullName>
        <shortName evidence="1">PDF</shortName>
        <ecNumber evidence="1">3.5.1.88</ecNumber>
    </recommendedName>
    <alternativeName>
        <fullName evidence="1">Polypeptide deformylase</fullName>
    </alternativeName>
</protein>
<feature type="chain" id="PRO_0000301029" description="Peptide deformylase">
    <location>
        <begin position="1"/>
        <end position="194"/>
    </location>
</feature>
<feature type="region of interest" description="Disordered" evidence="2">
    <location>
        <begin position="71"/>
        <end position="93"/>
    </location>
</feature>
<feature type="compositionally biased region" description="Basic and acidic residues" evidence="2">
    <location>
        <begin position="76"/>
        <end position="93"/>
    </location>
</feature>
<feature type="active site" evidence="1">
    <location>
        <position position="162"/>
    </location>
</feature>
<feature type="binding site" evidence="1">
    <location>
        <position position="119"/>
    </location>
    <ligand>
        <name>Fe cation</name>
        <dbReference type="ChEBI" id="CHEBI:24875"/>
    </ligand>
</feature>
<feature type="binding site" evidence="1">
    <location>
        <position position="161"/>
    </location>
    <ligand>
        <name>Fe cation</name>
        <dbReference type="ChEBI" id="CHEBI:24875"/>
    </ligand>
</feature>
<feature type="binding site" evidence="1">
    <location>
        <position position="165"/>
    </location>
    <ligand>
        <name>Fe cation</name>
        <dbReference type="ChEBI" id="CHEBI:24875"/>
    </ligand>
</feature>
<accession>Q2NCT3</accession>
<proteinExistence type="inferred from homology"/>
<evidence type="ECO:0000255" key="1">
    <source>
        <dbReference type="HAMAP-Rule" id="MF_00163"/>
    </source>
</evidence>
<evidence type="ECO:0000256" key="2">
    <source>
        <dbReference type="SAM" id="MobiDB-lite"/>
    </source>
</evidence>
<sequence length="194" mass="21910">MAIREILEVPDPRLKTVSEPVQPDEFNDDLKQLVDDMFETMYAAPGIGLAAIQVGVPKRVLVIDLQEPDMDAEPEECGHDHGDGEGAHKHYPVKNDPRIFINPEIIDPNEELSTYQEGCLSVPEIYADVDRPKTCTVKYQDLTGKTHQEDLDGLLATCLQHEMDHLEGILFIDHLSRLKKQMALKKLKKMRQAA</sequence>
<gene>
    <name evidence="1" type="primary">def</name>
    <name type="ordered locus">ELI_02080</name>
</gene>
<keyword id="KW-0378">Hydrolase</keyword>
<keyword id="KW-0408">Iron</keyword>
<keyword id="KW-0479">Metal-binding</keyword>
<keyword id="KW-0648">Protein biosynthesis</keyword>
<keyword id="KW-1185">Reference proteome</keyword>
<dbReference type="EC" id="3.5.1.88" evidence="1"/>
<dbReference type="EMBL" id="CP000157">
    <property type="protein sequence ID" value="ABC62508.1"/>
    <property type="molecule type" value="Genomic_DNA"/>
</dbReference>
<dbReference type="RefSeq" id="WP_011413384.1">
    <property type="nucleotide sequence ID" value="NC_007722.1"/>
</dbReference>
<dbReference type="SMR" id="Q2NCT3"/>
<dbReference type="STRING" id="314225.ELI_02080"/>
<dbReference type="KEGG" id="eli:ELI_02080"/>
<dbReference type="eggNOG" id="COG0242">
    <property type="taxonomic scope" value="Bacteria"/>
</dbReference>
<dbReference type="HOGENOM" id="CLU_061901_2_0_5"/>
<dbReference type="OrthoDB" id="9804313at2"/>
<dbReference type="Proteomes" id="UP000008808">
    <property type="component" value="Chromosome"/>
</dbReference>
<dbReference type="GO" id="GO:0046872">
    <property type="term" value="F:metal ion binding"/>
    <property type="evidence" value="ECO:0007669"/>
    <property type="project" value="UniProtKB-KW"/>
</dbReference>
<dbReference type="GO" id="GO:0042586">
    <property type="term" value="F:peptide deformylase activity"/>
    <property type="evidence" value="ECO:0007669"/>
    <property type="project" value="UniProtKB-UniRule"/>
</dbReference>
<dbReference type="GO" id="GO:0043686">
    <property type="term" value="P:co-translational protein modification"/>
    <property type="evidence" value="ECO:0007669"/>
    <property type="project" value="TreeGrafter"/>
</dbReference>
<dbReference type="GO" id="GO:0006412">
    <property type="term" value="P:translation"/>
    <property type="evidence" value="ECO:0007669"/>
    <property type="project" value="UniProtKB-UniRule"/>
</dbReference>
<dbReference type="CDD" id="cd00487">
    <property type="entry name" value="Pep_deformylase"/>
    <property type="match status" value="1"/>
</dbReference>
<dbReference type="Gene3D" id="3.90.45.10">
    <property type="entry name" value="Peptide deformylase"/>
    <property type="match status" value="1"/>
</dbReference>
<dbReference type="HAMAP" id="MF_00163">
    <property type="entry name" value="Pep_deformylase"/>
    <property type="match status" value="1"/>
</dbReference>
<dbReference type="InterPro" id="IPR023635">
    <property type="entry name" value="Peptide_deformylase"/>
</dbReference>
<dbReference type="InterPro" id="IPR036821">
    <property type="entry name" value="Peptide_deformylase_sf"/>
</dbReference>
<dbReference type="NCBIfam" id="TIGR00079">
    <property type="entry name" value="pept_deformyl"/>
    <property type="match status" value="1"/>
</dbReference>
<dbReference type="NCBIfam" id="NF001159">
    <property type="entry name" value="PRK00150.1-3"/>
    <property type="match status" value="1"/>
</dbReference>
<dbReference type="PANTHER" id="PTHR10458">
    <property type="entry name" value="PEPTIDE DEFORMYLASE"/>
    <property type="match status" value="1"/>
</dbReference>
<dbReference type="PANTHER" id="PTHR10458:SF22">
    <property type="entry name" value="PEPTIDE DEFORMYLASE"/>
    <property type="match status" value="1"/>
</dbReference>
<dbReference type="Pfam" id="PF01327">
    <property type="entry name" value="Pep_deformylase"/>
    <property type="match status" value="1"/>
</dbReference>
<dbReference type="PIRSF" id="PIRSF004749">
    <property type="entry name" value="Pep_def"/>
    <property type="match status" value="1"/>
</dbReference>
<dbReference type="PRINTS" id="PR01576">
    <property type="entry name" value="PDEFORMYLASE"/>
</dbReference>
<dbReference type="SUPFAM" id="SSF56420">
    <property type="entry name" value="Peptide deformylase"/>
    <property type="match status" value="1"/>
</dbReference>
<name>DEF_ERYLH</name>
<comment type="function">
    <text evidence="1">Removes the formyl group from the N-terminal Met of newly synthesized proteins. Requires at least a dipeptide for an efficient rate of reaction. N-terminal L-methionine is a prerequisite for activity but the enzyme has broad specificity at other positions.</text>
</comment>
<comment type="catalytic activity">
    <reaction evidence="1">
        <text>N-terminal N-formyl-L-methionyl-[peptide] + H2O = N-terminal L-methionyl-[peptide] + formate</text>
        <dbReference type="Rhea" id="RHEA:24420"/>
        <dbReference type="Rhea" id="RHEA-COMP:10639"/>
        <dbReference type="Rhea" id="RHEA-COMP:10640"/>
        <dbReference type="ChEBI" id="CHEBI:15377"/>
        <dbReference type="ChEBI" id="CHEBI:15740"/>
        <dbReference type="ChEBI" id="CHEBI:49298"/>
        <dbReference type="ChEBI" id="CHEBI:64731"/>
        <dbReference type="EC" id="3.5.1.88"/>
    </reaction>
</comment>
<comment type="cofactor">
    <cofactor evidence="1">
        <name>Fe(2+)</name>
        <dbReference type="ChEBI" id="CHEBI:29033"/>
    </cofactor>
    <text evidence="1">Binds 1 Fe(2+) ion.</text>
</comment>
<comment type="similarity">
    <text evidence="1">Belongs to the polypeptide deformylase family.</text>
</comment>
<organism>
    <name type="scientific">Erythrobacter litoralis (strain HTCC2594)</name>
    <dbReference type="NCBI Taxonomy" id="314225"/>
    <lineage>
        <taxon>Bacteria</taxon>
        <taxon>Pseudomonadati</taxon>
        <taxon>Pseudomonadota</taxon>
        <taxon>Alphaproteobacteria</taxon>
        <taxon>Sphingomonadales</taxon>
        <taxon>Erythrobacteraceae</taxon>
        <taxon>Erythrobacter/Porphyrobacter group</taxon>
        <taxon>Erythrobacter</taxon>
    </lineage>
</organism>
<reference key="1">
    <citation type="journal article" date="2009" name="J. Bacteriol.">
        <title>Complete genome sequence of Erythrobacter litoralis HTCC2594.</title>
        <authorList>
            <person name="Oh H.M."/>
            <person name="Giovannoni S.J."/>
            <person name="Ferriera S."/>
            <person name="Johnson J."/>
            <person name="Cho J.C."/>
        </authorList>
    </citation>
    <scope>NUCLEOTIDE SEQUENCE [LARGE SCALE GENOMIC DNA]</scope>
    <source>
        <strain>HTCC2594</strain>
    </source>
</reference>